<feature type="chain" id="PRO_1000205731" description="Homoserine kinase">
    <location>
        <begin position="1"/>
        <end position="297"/>
    </location>
</feature>
<feature type="binding site" evidence="1">
    <location>
        <begin position="82"/>
        <end position="92"/>
    </location>
    <ligand>
        <name>ATP</name>
        <dbReference type="ChEBI" id="CHEBI:30616"/>
    </ligand>
</feature>
<sequence>MVEVRVPATSANIGSGFDCLGVAVNMYNKFFVEEIEEGLIFEGCADKFKNEDNLIYVAMKKCFDKIGYKPTGLRIKIESDIPVSRGLGSSAACVVGGIVSANELAGGVLNKKELLDLAVEVEGHPDNVNPAFCGGMTASISDNREVIYSKVKVSEGIKFCALIPDFTLSTEKARAVLPKSIDYKDGIFNVGRTALMISALNNGDFHLIKYACKDKLHQDYRAKLIENFYSIKEECEKLNSLGVFLSGAGPTIMVMLREEDKDFSKNIKSFLETLKNKWEVRELKIDKLGTVVNNRKV</sequence>
<organism>
    <name type="scientific">Clostridium botulinum (strain 657 / Type Ba4)</name>
    <dbReference type="NCBI Taxonomy" id="515621"/>
    <lineage>
        <taxon>Bacteria</taxon>
        <taxon>Bacillati</taxon>
        <taxon>Bacillota</taxon>
        <taxon>Clostridia</taxon>
        <taxon>Eubacteriales</taxon>
        <taxon>Clostridiaceae</taxon>
        <taxon>Clostridium</taxon>
    </lineage>
</organism>
<name>KHSE_CLOB6</name>
<reference key="1">
    <citation type="submission" date="2008-05" db="EMBL/GenBank/DDBJ databases">
        <title>Genome sequence of Clostridium botulinum Ba4 strain 657.</title>
        <authorList>
            <person name="Shrivastava S."/>
            <person name="Brown J.L."/>
            <person name="Bruce D."/>
            <person name="Detter C."/>
            <person name="Munk C."/>
            <person name="Smith L.A."/>
            <person name="Smith T.J."/>
            <person name="Sutton G."/>
            <person name="Brettin T.S."/>
        </authorList>
    </citation>
    <scope>NUCLEOTIDE SEQUENCE [LARGE SCALE GENOMIC DNA]</scope>
    <source>
        <strain>657 / Type Ba4</strain>
    </source>
</reference>
<accession>C3KW44</accession>
<comment type="function">
    <text evidence="1">Catalyzes the ATP-dependent phosphorylation of L-homoserine to L-homoserine phosphate.</text>
</comment>
<comment type="catalytic activity">
    <reaction evidence="1">
        <text>L-homoserine + ATP = O-phospho-L-homoserine + ADP + H(+)</text>
        <dbReference type="Rhea" id="RHEA:13985"/>
        <dbReference type="ChEBI" id="CHEBI:15378"/>
        <dbReference type="ChEBI" id="CHEBI:30616"/>
        <dbReference type="ChEBI" id="CHEBI:57476"/>
        <dbReference type="ChEBI" id="CHEBI:57590"/>
        <dbReference type="ChEBI" id="CHEBI:456216"/>
        <dbReference type="EC" id="2.7.1.39"/>
    </reaction>
</comment>
<comment type="pathway">
    <text evidence="1">Amino-acid biosynthesis; L-threonine biosynthesis; L-threonine from L-aspartate: step 4/5.</text>
</comment>
<comment type="subcellular location">
    <subcellularLocation>
        <location evidence="1">Cytoplasm</location>
    </subcellularLocation>
</comment>
<comment type="similarity">
    <text evidence="1">Belongs to the GHMP kinase family. Homoserine kinase subfamily.</text>
</comment>
<protein>
    <recommendedName>
        <fullName evidence="1">Homoserine kinase</fullName>
        <shortName evidence="1">HK</shortName>
        <shortName evidence="1">HSK</shortName>
        <ecNumber evidence="1">2.7.1.39</ecNumber>
    </recommendedName>
</protein>
<evidence type="ECO:0000255" key="1">
    <source>
        <dbReference type="HAMAP-Rule" id="MF_00384"/>
    </source>
</evidence>
<gene>
    <name evidence="1" type="primary">thrB</name>
    <name type="ordered locus">CLJ_B1748</name>
</gene>
<proteinExistence type="inferred from homology"/>
<dbReference type="EC" id="2.7.1.39" evidence="1"/>
<dbReference type="EMBL" id="CP001083">
    <property type="protein sequence ID" value="ACQ54129.1"/>
    <property type="molecule type" value="Genomic_DNA"/>
</dbReference>
<dbReference type="RefSeq" id="WP_003362654.1">
    <property type="nucleotide sequence ID" value="NC_012658.1"/>
</dbReference>
<dbReference type="SMR" id="C3KW44"/>
<dbReference type="KEGG" id="cbi:CLJ_B1748"/>
<dbReference type="HOGENOM" id="CLU_041243_0_2_9"/>
<dbReference type="UniPathway" id="UPA00050">
    <property type="reaction ID" value="UER00064"/>
</dbReference>
<dbReference type="Proteomes" id="UP000002333">
    <property type="component" value="Chromosome"/>
</dbReference>
<dbReference type="GO" id="GO:0005737">
    <property type="term" value="C:cytoplasm"/>
    <property type="evidence" value="ECO:0007669"/>
    <property type="project" value="UniProtKB-SubCell"/>
</dbReference>
<dbReference type="GO" id="GO:0005524">
    <property type="term" value="F:ATP binding"/>
    <property type="evidence" value="ECO:0007669"/>
    <property type="project" value="UniProtKB-UniRule"/>
</dbReference>
<dbReference type="GO" id="GO:0004413">
    <property type="term" value="F:homoserine kinase activity"/>
    <property type="evidence" value="ECO:0007669"/>
    <property type="project" value="UniProtKB-UniRule"/>
</dbReference>
<dbReference type="GO" id="GO:0009088">
    <property type="term" value="P:threonine biosynthetic process"/>
    <property type="evidence" value="ECO:0007669"/>
    <property type="project" value="UniProtKB-UniRule"/>
</dbReference>
<dbReference type="Gene3D" id="3.30.230.10">
    <property type="match status" value="1"/>
</dbReference>
<dbReference type="Gene3D" id="3.30.70.890">
    <property type="entry name" value="GHMP kinase, C-terminal domain"/>
    <property type="match status" value="1"/>
</dbReference>
<dbReference type="HAMAP" id="MF_00384">
    <property type="entry name" value="Homoser_kinase"/>
    <property type="match status" value="1"/>
</dbReference>
<dbReference type="InterPro" id="IPR013750">
    <property type="entry name" value="GHMP_kinase_C_dom"/>
</dbReference>
<dbReference type="InterPro" id="IPR036554">
    <property type="entry name" value="GHMP_kinase_C_sf"/>
</dbReference>
<dbReference type="InterPro" id="IPR006204">
    <property type="entry name" value="GHMP_kinase_N_dom"/>
</dbReference>
<dbReference type="InterPro" id="IPR006203">
    <property type="entry name" value="GHMP_knse_ATP-bd_CS"/>
</dbReference>
<dbReference type="InterPro" id="IPR000870">
    <property type="entry name" value="Homoserine_kinase"/>
</dbReference>
<dbReference type="InterPro" id="IPR020568">
    <property type="entry name" value="Ribosomal_Su5_D2-typ_SF"/>
</dbReference>
<dbReference type="InterPro" id="IPR014721">
    <property type="entry name" value="Ribsml_uS5_D2-typ_fold_subgr"/>
</dbReference>
<dbReference type="NCBIfam" id="NF002288">
    <property type="entry name" value="PRK01212.1-4"/>
    <property type="match status" value="1"/>
</dbReference>
<dbReference type="NCBIfam" id="TIGR00191">
    <property type="entry name" value="thrB"/>
    <property type="match status" value="1"/>
</dbReference>
<dbReference type="PANTHER" id="PTHR20861:SF1">
    <property type="entry name" value="HOMOSERINE KINASE"/>
    <property type="match status" value="1"/>
</dbReference>
<dbReference type="PANTHER" id="PTHR20861">
    <property type="entry name" value="HOMOSERINE/4-DIPHOSPHOCYTIDYL-2-C-METHYL-D-ERYTHRITOL KINASE"/>
    <property type="match status" value="1"/>
</dbReference>
<dbReference type="Pfam" id="PF08544">
    <property type="entry name" value="GHMP_kinases_C"/>
    <property type="match status" value="1"/>
</dbReference>
<dbReference type="Pfam" id="PF00288">
    <property type="entry name" value="GHMP_kinases_N"/>
    <property type="match status" value="1"/>
</dbReference>
<dbReference type="PIRSF" id="PIRSF000676">
    <property type="entry name" value="Homoser_kin"/>
    <property type="match status" value="1"/>
</dbReference>
<dbReference type="PRINTS" id="PR00958">
    <property type="entry name" value="HOMSERKINASE"/>
</dbReference>
<dbReference type="SUPFAM" id="SSF55060">
    <property type="entry name" value="GHMP Kinase, C-terminal domain"/>
    <property type="match status" value="1"/>
</dbReference>
<dbReference type="SUPFAM" id="SSF54211">
    <property type="entry name" value="Ribosomal protein S5 domain 2-like"/>
    <property type="match status" value="1"/>
</dbReference>
<dbReference type="PROSITE" id="PS00627">
    <property type="entry name" value="GHMP_KINASES_ATP"/>
    <property type="match status" value="1"/>
</dbReference>
<keyword id="KW-0028">Amino-acid biosynthesis</keyword>
<keyword id="KW-0067">ATP-binding</keyword>
<keyword id="KW-0963">Cytoplasm</keyword>
<keyword id="KW-0418">Kinase</keyword>
<keyword id="KW-0547">Nucleotide-binding</keyword>
<keyword id="KW-0791">Threonine biosynthesis</keyword>
<keyword id="KW-0808">Transferase</keyword>